<dbReference type="EMBL" id="X52498">
    <property type="protein sequence ID" value="CAA36741.1"/>
    <property type="molecule type" value="mRNA"/>
</dbReference>
<dbReference type="EMBL" id="AY550025">
    <property type="protein sequence ID" value="AAS55640.1"/>
    <property type="molecule type" value="mRNA"/>
</dbReference>
<dbReference type="EMBL" id="BC076380">
    <property type="protein sequence ID" value="AAH76380.1"/>
    <property type="molecule type" value="mRNA"/>
</dbReference>
<dbReference type="PIR" id="S10219">
    <property type="entry name" value="S10219"/>
</dbReference>
<dbReference type="RefSeq" id="NP_067589.1">
    <property type="nucleotide sequence ID" value="NM_021578.2"/>
</dbReference>
<dbReference type="SMR" id="P17246"/>
<dbReference type="BioGRID" id="248721">
    <property type="interactions" value="1"/>
</dbReference>
<dbReference type="DIP" id="DIP-6247N"/>
<dbReference type="FunCoup" id="P17246">
    <property type="interactions" value="748"/>
</dbReference>
<dbReference type="STRING" id="10116.ENSRNOP00000028051"/>
<dbReference type="GlyCosmos" id="P17246">
    <property type="glycosylation" value="3 sites, No reported glycans"/>
</dbReference>
<dbReference type="GlyGen" id="P17246">
    <property type="glycosylation" value="3 sites"/>
</dbReference>
<dbReference type="PhosphoSitePlus" id="P17246"/>
<dbReference type="jPOST" id="P17246"/>
<dbReference type="PaxDb" id="10116-ENSRNOP00000028051"/>
<dbReference type="Ensembl" id="ENSRNOT00000028051.5">
    <property type="protein sequence ID" value="ENSRNOP00000028051.2"/>
    <property type="gene ID" value="ENSRNOG00000020652.5"/>
</dbReference>
<dbReference type="GeneID" id="59086"/>
<dbReference type="KEGG" id="rno:59086"/>
<dbReference type="UCSC" id="RGD:69051">
    <property type="organism name" value="rat"/>
</dbReference>
<dbReference type="AGR" id="RGD:69051"/>
<dbReference type="CTD" id="7040"/>
<dbReference type="RGD" id="69051">
    <property type="gene designation" value="Tgfb1"/>
</dbReference>
<dbReference type="eggNOG" id="KOG3900">
    <property type="taxonomic scope" value="Eukaryota"/>
</dbReference>
<dbReference type="GeneTree" id="ENSGT00940000160457"/>
<dbReference type="HOGENOM" id="CLU_039840_0_0_1"/>
<dbReference type="InParanoid" id="P17246"/>
<dbReference type="OMA" id="SHNCCLK"/>
<dbReference type="OrthoDB" id="8863549at2759"/>
<dbReference type="PhylomeDB" id="P17246"/>
<dbReference type="TreeFam" id="TF318514"/>
<dbReference type="Reactome" id="R-RNO-114608">
    <property type="pathway name" value="Platelet degranulation"/>
</dbReference>
<dbReference type="Reactome" id="R-RNO-202733">
    <property type="pathway name" value="Cell surface interactions at the vascular wall"/>
</dbReference>
<dbReference type="Reactome" id="R-RNO-2129379">
    <property type="pathway name" value="Molecules associated with elastic fibres"/>
</dbReference>
<dbReference type="Reactome" id="R-RNO-2173788">
    <property type="pathway name" value="Downregulation of TGF-beta receptor signaling"/>
</dbReference>
<dbReference type="Reactome" id="R-RNO-2173789">
    <property type="pathway name" value="TGF-beta receptor signaling activates SMADs"/>
</dbReference>
<dbReference type="Reactome" id="R-RNO-2173791">
    <property type="pathway name" value="TGF-beta receptor signaling in EMT (epithelial to mesenchymal transition)"/>
</dbReference>
<dbReference type="Reactome" id="R-RNO-3000170">
    <property type="pathway name" value="Syndecan interactions"/>
</dbReference>
<dbReference type="Reactome" id="R-RNO-8941855">
    <property type="pathway name" value="RUNX3 regulates CDKN1A transcription"/>
</dbReference>
<dbReference type="Reactome" id="R-RNO-8941858">
    <property type="pathway name" value="Regulation of RUNX3 expression and activity"/>
</dbReference>
<dbReference type="Reactome" id="R-RNO-8951936">
    <property type="pathway name" value="RUNX3 regulates p14-ARF"/>
</dbReference>
<dbReference type="Reactome" id="R-RNO-9839389">
    <property type="pathway name" value="TGFBR3 regulates TGF-beta signaling"/>
</dbReference>
<dbReference type="PRO" id="PR:P17246"/>
<dbReference type="Proteomes" id="UP000002494">
    <property type="component" value="Chromosome 1"/>
</dbReference>
<dbReference type="Bgee" id="ENSRNOG00000020652">
    <property type="expression patterns" value="Expressed in spleen and 18 other cell types or tissues"/>
</dbReference>
<dbReference type="GO" id="GO:0030424">
    <property type="term" value="C:axon"/>
    <property type="evidence" value="ECO:0000314"/>
    <property type="project" value="RGD"/>
</dbReference>
<dbReference type="GO" id="GO:0072562">
    <property type="term" value="C:blood microparticle"/>
    <property type="evidence" value="ECO:0000250"/>
    <property type="project" value="AgBase"/>
</dbReference>
<dbReference type="GO" id="GO:0009986">
    <property type="term" value="C:cell surface"/>
    <property type="evidence" value="ECO:0000314"/>
    <property type="project" value="BHF-UCL"/>
</dbReference>
<dbReference type="GO" id="GO:0005737">
    <property type="term" value="C:cytoplasm"/>
    <property type="evidence" value="ECO:0000266"/>
    <property type="project" value="RGD"/>
</dbReference>
<dbReference type="GO" id="GO:0031012">
    <property type="term" value="C:extracellular matrix"/>
    <property type="evidence" value="ECO:0000266"/>
    <property type="project" value="RGD"/>
</dbReference>
<dbReference type="GO" id="GO:0005615">
    <property type="term" value="C:extracellular space"/>
    <property type="evidence" value="ECO:0000314"/>
    <property type="project" value="RGD"/>
</dbReference>
<dbReference type="GO" id="GO:0005902">
    <property type="term" value="C:microvillus"/>
    <property type="evidence" value="ECO:0000266"/>
    <property type="project" value="RGD"/>
</dbReference>
<dbReference type="GO" id="GO:0043025">
    <property type="term" value="C:neuronal cell body"/>
    <property type="evidence" value="ECO:0000314"/>
    <property type="project" value="RGD"/>
</dbReference>
<dbReference type="GO" id="GO:0005634">
    <property type="term" value="C:nucleus"/>
    <property type="evidence" value="ECO:0000250"/>
    <property type="project" value="UniProtKB"/>
</dbReference>
<dbReference type="GO" id="GO:0030141">
    <property type="term" value="C:secretory granule"/>
    <property type="evidence" value="ECO:0000314"/>
    <property type="project" value="RGD"/>
</dbReference>
<dbReference type="GO" id="GO:0005125">
    <property type="term" value="F:cytokine activity"/>
    <property type="evidence" value="ECO:0000266"/>
    <property type="project" value="RGD"/>
</dbReference>
<dbReference type="GO" id="GO:0035800">
    <property type="term" value="F:deubiquitinase activator activity"/>
    <property type="evidence" value="ECO:0000266"/>
    <property type="project" value="RGD"/>
</dbReference>
<dbReference type="GO" id="GO:0019899">
    <property type="term" value="F:enzyme binding"/>
    <property type="evidence" value="ECO:0000266"/>
    <property type="project" value="RGD"/>
</dbReference>
<dbReference type="GO" id="GO:0008083">
    <property type="term" value="F:growth factor activity"/>
    <property type="evidence" value="ECO:0000266"/>
    <property type="project" value="RGD"/>
</dbReference>
<dbReference type="GO" id="GO:0042802">
    <property type="term" value="F:identical protein binding"/>
    <property type="evidence" value="ECO:0000353"/>
    <property type="project" value="RGD"/>
</dbReference>
<dbReference type="GO" id="GO:0043539">
    <property type="term" value="F:protein serine/threonine kinase activator activity"/>
    <property type="evidence" value="ECO:0000266"/>
    <property type="project" value="RGD"/>
</dbReference>
<dbReference type="GO" id="GO:0044877">
    <property type="term" value="F:protein-containing complex binding"/>
    <property type="evidence" value="ECO:0000314"/>
    <property type="project" value="RGD"/>
</dbReference>
<dbReference type="GO" id="GO:0005160">
    <property type="term" value="F:transforming growth factor beta receptor binding"/>
    <property type="evidence" value="ECO:0000266"/>
    <property type="project" value="RGD"/>
</dbReference>
<dbReference type="GO" id="GO:0034713">
    <property type="term" value="F:type I transforming growth factor beta receptor binding"/>
    <property type="evidence" value="ECO:0000250"/>
    <property type="project" value="AgBase"/>
</dbReference>
<dbReference type="GO" id="GO:0005114">
    <property type="term" value="F:type II transforming growth factor beta receptor binding"/>
    <property type="evidence" value="ECO:0000250"/>
    <property type="project" value="UniProtKB"/>
</dbReference>
<dbReference type="GO" id="GO:0034714">
    <property type="term" value="F:type III transforming growth factor beta receptor binding"/>
    <property type="evidence" value="ECO:0000250"/>
    <property type="project" value="AgBase"/>
</dbReference>
<dbReference type="GO" id="GO:0002460">
    <property type="term" value="P:adaptive immune response based on somatic recombination of immune receptors built from immunoglobulin superfamily domains"/>
    <property type="evidence" value="ECO:0000266"/>
    <property type="project" value="RGD"/>
</dbReference>
<dbReference type="GO" id="GO:0031100">
    <property type="term" value="P:animal organ regeneration"/>
    <property type="evidence" value="ECO:0000315"/>
    <property type="project" value="RGD"/>
</dbReference>
<dbReference type="GO" id="GO:0003180">
    <property type="term" value="P:aortic valve morphogenesis"/>
    <property type="evidence" value="ECO:0000266"/>
    <property type="project" value="RGD"/>
</dbReference>
<dbReference type="GO" id="GO:0006754">
    <property type="term" value="P:ATP biosynthetic process"/>
    <property type="evidence" value="ECO:0000250"/>
    <property type="project" value="UniProtKB"/>
</dbReference>
<dbReference type="GO" id="GO:0060751">
    <property type="term" value="P:branch elongation involved in mammary gland duct branching"/>
    <property type="evidence" value="ECO:0000266"/>
    <property type="project" value="RGD"/>
</dbReference>
<dbReference type="GO" id="GO:0060435">
    <property type="term" value="P:bronchiole development"/>
    <property type="evidence" value="ECO:0000266"/>
    <property type="project" value="RGD"/>
</dbReference>
<dbReference type="GO" id="GO:0060070">
    <property type="term" value="P:canonical Wnt signaling pathway"/>
    <property type="evidence" value="ECO:0000266"/>
    <property type="project" value="RGD"/>
</dbReference>
<dbReference type="GO" id="GO:0001775">
    <property type="term" value="P:cell activation"/>
    <property type="evidence" value="ECO:0000266"/>
    <property type="project" value="RGD"/>
</dbReference>
<dbReference type="GO" id="GO:0000902">
    <property type="term" value="P:cell morphogenesis"/>
    <property type="evidence" value="ECO:0000266"/>
    <property type="project" value="RGD"/>
</dbReference>
<dbReference type="GO" id="GO:0008283">
    <property type="term" value="P:cell population proliferation"/>
    <property type="evidence" value="ECO:0000266"/>
    <property type="project" value="RGD"/>
</dbReference>
<dbReference type="GO" id="GO:0045216">
    <property type="term" value="P:cell-cell junction organization"/>
    <property type="evidence" value="ECO:0000250"/>
    <property type="project" value="UniProtKB"/>
</dbReference>
<dbReference type="GO" id="GO:1905641">
    <property type="term" value="P:cellular response to acetaldehyde"/>
    <property type="evidence" value="ECO:0000270"/>
    <property type="project" value="RGD"/>
</dbReference>
<dbReference type="GO" id="GO:0071549">
    <property type="term" value="P:cellular response to dexamethasone stimulus"/>
    <property type="evidence" value="ECO:0000314"/>
    <property type="project" value="UniProtKB"/>
</dbReference>
<dbReference type="GO" id="GO:0071333">
    <property type="term" value="P:cellular response to glucose stimulus"/>
    <property type="evidence" value="ECO:0000270"/>
    <property type="project" value="RGD"/>
</dbReference>
<dbReference type="GO" id="GO:0071363">
    <property type="term" value="P:cellular response to growth factor stimulus"/>
    <property type="evidence" value="ECO:0000266"/>
    <property type="project" value="RGD"/>
</dbReference>
<dbReference type="GO" id="GO:0071456">
    <property type="term" value="P:cellular response to hypoxia"/>
    <property type="evidence" value="ECO:0000266"/>
    <property type="project" value="RGD"/>
</dbReference>
<dbReference type="GO" id="GO:1990314">
    <property type="term" value="P:cellular response to insulin-like growth factor stimulus"/>
    <property type="evidence" value="ECO:0000270"/>
    <property type="project" value="RGD"/>
</dbReference>
<dbReference type="GO" id="GO:0071479">
    <property type="term" value="P:cellular response to ionizing radiation"/>
    <property type="evidence" value="ECO:0000270"/>
    <property type="project" value="RGD"/>
</dbReference>
<dbReference type="GO" id="GO:0071404">
    <property type="term" value="P:cellular response to low-density lipoprotein particle stimulus"/>
    <property type="evidence" value="ECO:0000266"/>
    <property type="project" value="RGD"/>
</dbReference>
<dbReference type="GO" id="GO:0071260">
    <property type="term" value="P:cellular response to mechanical stimulus"/>
    <property type="evidence" value="ECO:0000270"/>
    <property type="project" value="RGD"/>
</dbReference>
<dbReference type="GO" id="GO:0071560">
    <property type="term" value="P:cellular response to transforming growth factor beta stimulus"/>
    <property type="evidence" value="ECO:0000250"/>
    <property type="project" value="AgBase"/>
</dbReference>
<dbReference type="GO" id="GO:0098586">
    <property type="term" value="P:cellular response to virus"/>
    <property type="evidence" value="ECO:0000266"/>
    <property type="project" value="RGD"/>
</dbReference>
<dbReference type="GO" id="GO:0002062">
    <property type="term" value="P:chondrocyte differentiation"/>
    <property type="evidence" value="ECO:0000250"/>
    <property type="project" value="UniProtKB"/>
</dbReference>
<dbReference type="GO" id="GO:0002069">
    <property type="term" value="P:columnar/cuboidal epithelial cell maturation"/>
    <property type="evidence" value="ECO:0000266"/>
    <property type="project" value="RGD"/>
</dbReference>
<dbReference type="GO" id="GO:0061448">
    <property type="term" value="P:connective tissue development"/>
    <property type="evidence" value="ECO:0000266"/>
    <property type="project" value="RGD"/>
</dbReference>
<dbReference type="GO" id="GO:0050832">
    <property type="term" value="P:defense response to fungus"/>
    <property type="evidence" value="ECO:0000314"/>
    <property type="project" value="RGD"/>
</dbReference>
<dbReference type="GO" id="GO:0048565">
    <property type="term" value="P:digestive tract development"/>
    <property type="evidence" value="ECO:0000270"/>
    <property type="project" value="RGD"/>
</dbReference>
<dbReference type="GO" id="GO:1990402">
    <property type="term" value="P:embryonic liver development"/>
    <property type="evidence" value="ECO:0000266"/>
    <property type="project" value="RGD"/>
</dbReference>
<dbReference type="GO" id="GO:0007492">
    <property type="term" value="P:endoderm development"/>
    <property type="evidence" value="ECO:0000266"/>
    <property type="project" value="RGD"/>
</dbReference>
<dbReference type="GO" id="GO:0050673">
    <property type="term" value="P:epithelial cell proliferation"/>
    <property type="evidence" value="ECO:0000266"/>
    <property type="project" value="RGD"/>
</dbReference>
<dbReference type="GO" id="GO:0001837">
    <property type="term" value="P:epithelial to mesenchymal transition"/>
    <property type="evidence" value="ECO:0000314"/>
    <property type="project" value="RGD"/>
</dbReference>
<dbReference type="GO" id="GO:0085029">
    <property type="term" value="P:extracellular matrix assembly"/>
    <property type="evidence" value="ECO:0000250"/>
    <property type="project" value="UniProtKB"/>
</dbReference>
<dbReference type="GO" id="GO:0097191">
    <property type="term" value="P:extrinsic apoptotic signaling pathway"/>
    <property type="evidence" value="ECO:0000250"/>
    <property type="project" value="UniProtKB"/>
</dbReference>
<dbReference type="GO" id="GO:0060325">
    <property type="term" value="P:face morphogenesis"/>
    <property type="evidence" value="ECO:0000266"/>
    <property type="project" value="RGD"/>
</dbReference>
<dbReference type="GO" id="GO:0007565">
    <property type="term" value="P:female pregnancy"/>
    <property type="evidence" value="ECO:0000270"/>
    <property type="project" value="RGD"/>
</dbReference>
<dbReference type="GO" id="GO:0060364">
    <property type="term" value="P:frontal suture morphogenesis"/>
    <property type="evidence" value="ECO:0000270"/>
    <property type="project" value="RGD"/>
</dbReference>
<dbReference type="GO" id="GO:0010467">
    <property type="term" value="P:gene expression"/>
    <property type="evidence" value="ECO:0000266"/>
    <property type="project" value="RGD"/>
</dbReference>
<dbReference type="GO" id="GO:0008354">
    <property type="term" value="P:germ cell migration"/>
    <property type="evidence" value="ECO:0000266"/>
    <property type="project" value="RGD"/>
</dbReference>
<dbReference type="GO" id="GO:0007507">
    <property type="term" value="P:heart development"/>
    <property type="evidence" value="ECO:0000266"/>
    <property type="project" value="RGD"/>
</dbReference>
<dbReference type="GO" id="GO:0003179">
    <property type="term" value="P:heart valve morphogenesis"/>
    <property type="evidence" value="ECO:0000266"/>
    <property type="project" value="RGD"/>
</dbReference>
<dbReference type="GO" id="GO:0002244">
    <property type="term" value="P:hematopoietic progenitor cell differentiation"/>
    <property type="evidence" value="ECO:0000250"/>
    <property type="project" value="UniProtKB"/>
</dbReference>
<dbReference type="GO" id="GO:0030214">
    <property type="term" value="P:hyaluronan catabolic process"/>
    <property type="evidence" value="ECO:0000250"/>
    <property type="project" value="UniProtKB"/>
</dbReference>
<dbReference type="GO" id="GO:0006954">
    <property type="term" value="P:inflammatory response"/>
    <property type="evidence" value="ECO:0000266"/>
    <property type="project" value="RGD"/>
</dbReference>
<dbReference type="GO" id="GO:0048839">
    <property type="term" value="P:inner ear development"/>
    <property type="evidence" value="ECO:0000270"/>
    <property type="project" value="RGD"/>
</dbReference>
<dbReference type="GO" id="GO:0006874">
    <property type="term" value="P:intracellular calcium ion homeostasis"/>
    <property type="evidence" value="ECO:0000266"/>
    <property type="project" value="RGD"/>
</dbReference>
<dbReference type="GO" id="GO:0061520">
    <property type="term" value="P:Langerhans cell differentiation"/>
    <property type="evidence" value="ECO:0000266"/>
    <property type="project" value="RGD"/>
</dbReference>
<dbReference type="GO" id="GO:0070306">
    <property type="term" value="P:lens fiber cell differentiation"/>
    <property type="evidence" value="ECO:0000266"/>
    <property type="project" value="RGD"/>
</dbReference>
<dbReference type="GO" id="GO:0097421">
    <property type="term" value="P:liver regeneration"/>
    <property type="evidence" value="ECO:0000270"/>
    <property type="project" value="RGD"/>
</dbReference>
<dbReference type="GO" id="GO:0048286">
    <property type="term" value="P:lung alveolus development"/>
    <property type="evidence" value="ECO:0000266"/>
    <property type="project" value="RGD"/>
</dbReference>
<dbReference type="GO" id="GO:0030324">
    <property type="term" value="P:lung development"/>
    <property type="evidence" value="ECO:0000304"/>
    <property type="project" value="RGD"/>
</dbReference>
<dbReference type="GO" id="GO:0048535">
    <property type="term" value="P:lymph node development"/>
    <property type="evidence" value="ECO:0000266"/>
    <property type="project" value="RGD"/>
</dbReference>
<dbReference type="GO" id="GO:0060744">
    <property type="term" value="P:mammary gland branching involved in thelarche"/>
    <property type="evidence" value="ECO:0000266"/>
    <property type="project" value="RGD"/>
</dbReference>
<dbReference type="GO" id="GO:0030879">
    <property type="term" value="P:mammary gland development"/>
    <property type="evidence" value="ECO:0000266"/>
    <property type="project" value="RGD"/>
</dbReference>
<dbReference type="GO" id="GO:0031293">
    <property type="term" value="P:membrane protein intracellular domain proteolysis"/>
    <property type="evidence" value="ECO:0000250"/>
    <property type="project" value="UniProtKB"/>
</dbReference>
<dbReference type="GO" id="GO:0032943">
    <property type="term" value="P:mononuclear cell proliferation"/>
    <property type="evidence" value="ECO:0000266"/>
    <property type="project" value="RGD"/>
</dbReference>
<dbReference type="GO" id="GO:0001763">
    <property type="term" value="P:morphogenesis of a branching structure"/>
    <property type="evidence" value="ECO:0000314"/>
    <property type="project" value="RGD"/>
</dbReference>
<dbReference type="GO" id="GO:0046716">
    <property type="term" value="P:muscle cell cellular homeostasis"/>
    <property type="evidence" value="ECO:0000266"/>
    <property type="project" value="RGD"/>
</dbReference>
<dbReference type="GO" id="GO:0042552">
    <property type="term" value="P:myelination"/>
    <property type="evidence" value="ECO:0000315"/>
    <property type="project" value="RGD"/>
</dbReference>
<dbReference type="GO" id="GO:0070168">
    <property type="term" value="P:negative regulation of biomineral tissue development"/>
    <property type="evidence" value="ECO:0000266"/>
    <property type="project" value="RGD"/>
</dbReference>
<dbReference type="GO" id="GO:0043537">
    <property type="term" value="P:negative regulation of blood vessel endothelial cell migration"/>
    <property type="evidence" value="ECO:0000250"/>
    <property type="project" value="UniProtKB"/>
</dbReference>
<dbReference type="GO" id="GO:0045786">
    <property type="term" value="P:negative regulation of cell cycle"/>
    <property type="evidence" value="ECO:0000250"/>
    <property type="project" value="UniProtKB"/>
</dbReference>
<dbReference type="GO" id="GO:0045596">
    <property type="term" value="P:negative regulation of cell differentiation"/>
    <property type="evidence" value="ECO:0000266"/>
    <property type="project" value="RGD"/>
</dbReference>
<dbReference type="GO" id="GO:0030308">
    <property type="term" value="P:negative regulation of cell growth"/>
    <property type="evidence" value="ECO:0000250"/>
    <property type="project" value="UniProtKB"/>
</dbReference>
<dbReference type="GO" id="GO:0008285">
    <property type="term" value="P:negative regulation of cell population proliferation"/>
    <property type="evidence" value="ECO:0000250"/>
    <property type="project" value="UniProtKB"/>
</dbReference>
<dbReference type="GO" id="GO:2000048">
    <property type="term" value="P:negative regulation of cell-cell adhesion mediated by cadherin"/>
    <property type="evidence" value="ECO:0000250"/>
    <property type="project" value="UniProtKB"/>
</dbReference>
<dbReference type="GO" id="GO:0045892">
    <property type="term" value="P:negative regulation of DNA-templated transcription"/>
    <property type="evidence" value="ECO:0000250"/>
    <property type="project" value="UniProtKB"/>
</dbReference>
<dbReference type="GO" id="GO:0050680">
    <property type="term" value="P:negative regulation of epithelial cell proliferation"/>
    <property type="evidence" value="ECO:0000314"/>
    <property type="project" value="RGD"/>
</dbReference>
<dbReference type="GO" id="GO:0045599">
    <property type="term" value="P:negative regulation of fat cell differentiation"/>
    <property type="evidence" value="ECO:0000250"/>
    <property type="project" value="UniProtKB"/>
</dbReference>
<dbReference type="GO" id="GO:0010629">
    <property type="term" value="P:negative regulation of gene expression"/>
    <property type="evidence" value="ECO:0000250"/>
    <property type="project" value="BHF-UCL"/>
</dbReference>
<dbReference type="GO" id="GO:1900126">
    <property type="term" value="P:negative regulation of hyaluronan biosynthetic process"/>
    <property type="evidence" value="ECO:0000250"/>
    <property type="project" value="UniProtKB"/>
</dbReference>
<dbReference type="GO" id="GO:0032700">
    <property type="term" value="P:negative regulation of interleukin-17 production"/>
    <property type="evidence" value="ECO:0000266"/>
    <property type="project" value="RGD"/>
</dbReference>
<dbReference type="GO" id="GO:0010936">
    <property type="term" value="P:negative regulation of macrophage cytokine production"/>
    <property type="evidence" value="ECO:0000250"/>
    <property type="project" value="AgBase"/>
</dbReference>
<dbReference type="GO" id="GO:1902894">
    <property type="term" value="P:negative regulation of miRNA transcription"/>
    <property type="evidence" value="ECO:0000266"/>
    <property type="project" value="RGD"/>
</dbReference>
<dbReference type="GO" id="GO:0045662">
    <property type="term" value="P:negative regulation of myoblast differentiation"/>
    <property type="evidence" value="ECO:0000250"/>
    <property type="project" value="UniProtKB"/>
</dbReference>
<dbReference type="GO" id="GO:0002859">
    <property type="term" value="P:negative regulation of natural killer cell mediated cytotoxicity directed against tumor cell target"/>
    <property type="evidence" value="ECO:0000266"/>
    <property type="project" value="RGD"/>
</dbReference>
<dbReference type="GO" id="GO:0007406">
    <property type="term" value="P:negative regulation of neuroblast proliferation"/>
    <property type="evidence" value="ECO:0000314"/>
    <property type="project" value="RGD"/>
</dbReference>
<dbReference type="GO" id="GO:0030279">
    <property type="term" value="P:negative regulation of ossification"/>
    <property type="evidence" value="ECO:0000266"/>
    <property type="project" value="RGD"/>
</dbReference>
<dbReference type="GO" id="GO:0050765">
    <property type="term" value="P:negative regulation of phagocytosis"/>
    <property type="evidence" value="ECO:0000314"/>
    <property type="project" value="RGD"/>
</dbReference>
<dbReference type="GO" id="GO:1903077">
    <property type="term" value="P:negative regulation of protein localization to plasma membrane"/>
    <property type="evidence" value="ECO:0000266"/>
    <property type="project" value="RGD"/>
</dbReference>
<dbReference type="GO" id="GO:0051280">
    <property type="term" value="P:negative regulation of release of sequestered calcium ion into cytosol"/>
    <property type="evidence" value="ECO:0000314"/>
    <property type="project" value="RGD"/>
</dbReference>
<dbReference type="GO" id="GO:0048642">
    <property type="term" value="P:negative regulation of skeletal muscle tissue development"/>
    <property type="evidence" value="ECO:0000250"/>
    <property type="project" value="UniProtKB"/>
</dbReference>
<dbReference type="GO" id="GO:0050868">
    <property type="term" value="P:negative regulation of T cell activation"/>
    <property type="evidence" value="ECO:0000266"/>
    <property type="project" value="RGD"/>
</dbReference>
<dbReference type="GO" id="GO:0042130">
    <property type="term" value="P:negative regulation of T cell proliferation"/>
    <property type="evidence" value="ECO:0000266"/>
    <property type="project" value="RGD"/>
</dbReference>
<dbReference type="GO" id="GO:0000122">
    <property type="term" value="P:negative regulation of transcription by RNA polymerase II"/>
    <property type="evidence" value="ECO:0000266"/>
    <property type="project" value="RGD"/>
</dbReference>
<dbReference type="GO" id="GO:0001843">
    <property type="term" value="P:neural tube closure"/>
    <property type="evidence" value="ECO:0000266"/>
    <property type="project" value="RGD"/>
</dbReference>
<dbReference type="GO" id="GO:0021915">
    <property type="term" value="P:neural tube development"/>
    <property type="evidence" value="ECO:0000266"/>
    <property type="project" value="RGD"/>
</dbReference>
<dbReference type="GO" id="GO:0051402">
    <property type="term" value="P:neuron apoptotic process"/>
    <property type="evidence" value="ECO:0000266"/>
    <property type="project" value="RGD"/>
</dbReference>
<dbReference type="GO" id="GO:0007219">
    <property type="term" value="P:Notch signaling pathway"/>
    <property type="evidence" value="ECO:0000266"/>
    <property type="project" value="RGD"/>
</dbReference>
<dbReference type="GO" id="GO:0071895">
    <property type="term" value="P:odontoblast differentiation"/>
    <property type="evidence" value="ECO:0000250"/>
    <property type="project" value="UniProtKB"/>
</dbReference>
<dbReference type="GO" id="GO:0042475">
    <property type="term" value="P:odontogenesis of dentin-containing tooth"/>
    <property type="evidence" value="ECO:0000270"/>
    <property type="project" value="RGD"/>
</dbReference>
<dbReference type="GO" id="GO:0014003">
    <property type="term" value="P:oligodendrocyte development"/>
    <property type="evidence" value="ECO:0000266"/>
    <property type="project" value="RGD"/>
</dbReference>
<dbReference type="GO" id="GO:0030316">
    <property type="term" value="P:osteoclast differentiation"/>
    <property type="evidence" value="ECO:0000266"/>
    <property type="project" value="RGD"/>
</dbReference>
<dbReference type="GO" id="GO:0006796">
    <property type="term" value="P:phosphate-containing compound metabolic process"/>
    <property type="evidence" value="ECO:0000250"/>
    <property type="project" value="UniProtKB"/>
</dbReference>
<dbReference type="GO" id="GO:0055091">
    <property type="term" value="P:phospholipid homeostasis"/>
    <property type="evidence" value="ECO:0000266"/>
    <property type="project" value="RGD"/>
</dbReference>
<dbReference type="GO" id="GO:0043065">
    <property type="term" value="P:positive regulation of apoptotic process"/>
    <property type="evidence" value="ECO:0000314"/>
    <property type="project" value="RGD"/>
</dbReference>
<dbReference type="GO" id="GO:0043536">
    <property type="term" value="P:positive regulation of blood vessel endothelial cell migration"/>
    <property type="evidence" value="ECO:0000250"/>
    <property type="project" value="UniProtKB"/>
</dbReference>
<dbReference type="GO" id="GO:0090190">
    <property type="term" value="P:positive regulation of branching involved in ureteric bud morphogenesis"/>
    <property type="evidence" value="ECO:0000315"/>
    <property type="project" value="UniProtKB"/>
</dbReference>
<dbReference type="GO" id="GO:0043123">
    <property type="term" value="P:positive regulation of canonical NF-kappaB signal transduction"/>
    <property type="evidence" value="ECO:0000266"/>
    <property type="project" value="RGD"/>
</dbReference>
<dbReference type="GO" id="GO:0090263">
    <property type="term" value="P:positive regulation of canonical Wnt signaling pathway"/>
    <property type="evidence" value="ECO:0000266"/>
    <property type="project" value="RGD"/>
</dbReference>
<dbReference type="GO" id="GO:2000727">
    <property type="term" value="P:positive regulation of cardiac muscle cell differentiation"/>
    <property type="evidence" value="ECO:0000266"/>
    <property type="project" value="RGD"/>
</dbReference>
<dbReference type="GO" id="GO:0051781">
    <property type="term" value="P:positive regulation of cell division"/>
    <property type="evidence" value="ECO:0007669"/>
    <property type="project" value="UniProtKB-KW"/>
</dbReference>
<dbReference type="GO" id="GO:0030335">
    <property type="term" value="P:positive regulation of cell migration"/>
    <property type="evidence" value="ECO:0000250"/>
    <property type="project" value="UniProtKB"/>
</dbReference>
<dbReference type="GO" id="GO:0008284">
    <property type="term" value="P:positive regulation of cell population proliferation"/>
    <property type="evidence" value="ECO:0000250"/>
    <property type="project" value="UniProtKB"/>
</dbReference>
<dbReference type="GO" id="GO:2000343">
    <property type="term" value="P:positive regulation of chemokine (C-X-C motif) ligand 2 production"/>
    <property type="evidence" value="ECO:0000266"/>
    <property type="project" value="RGD"/>
</dbReference>
<dbReference type="GO" id="GO:0050921">
    <property type="term" value="P:positive regulation of chemotaxis"/>
    <property type="evidence" value="ECO:0000250"/>
    <property type="project" value="UniProtKB"/>
</dbReference>
<dbReference type="GO" id="GO:0032967">
    <property type="term" value="P:positive regulation of collagen biosynthetic process"/>
    <property type="evidence" value="ECO:0000315"/>
    <property type="project" value="RGD"/>
</dbReference>
<dbReference type="GO" id="GO:0045893">
    <property type="term" value="P:positive regulation of DNA-templated transcription"/>
    <property type="evidence" value="ECO:0000266"/>
    <property type="project" value="RGD"/>
</dbReference>
<dbReference type="GO" id="GO:2000353">
    <property type="term" value="P:positive regulation of endothelial cell apoptotic process"/>
    <property type="evidence" value="ECO:0000266"/>
    <property type="project" value="RGD"/>
</dbReference>
<dbReference type="GO" id="GO:0045742">
    <property type="term" value="P:positive regulation of epidermal growth factor receptor signaling pathway"/>
    <property type="evidence" value="ECO:0000250"/>
    <property type="project" value="UniProtKB"/>
</dbReference>
<dbReference type="GO" id="GO:0050679">
    <property type="term" value="P:positive regulation of epithelial cell proliferation"/>
    <property type="evidence" value="ECO:0000314"/>
    <property type="project" value="RGD"/>
</dbReference>
<dbReference type="GO" id="GO:0010718">
    <property type="term" value="P:positive regulation of epithelial to mesenchymal transition"/>
    <property type="evidence" value="ECO:0000250"/>
    <property type="project" value="UniProtKB"/>
</dbReference>
<dbReference type="GO" id="GO:0070374">
    <property type="term" value="P:positive regulation of ERK1 and ERK2 cascade"/>
    <property type="evidence" value="ECO:0000250"/>
    <property type="project" value="UniProtKB"/>
</dbReference>
<dbReference type="GO" id="GO:0031536">
    <property type="term" value="P:positive regulation of exit from mitosis"/>
    <property type="evidence" value="ECO:0000314"/>
    <property type="project" value="RGD"/>
</dbReference>
<dbReference type="GO" id="GO:1901203">
    <property type="term" value="P:positive regulation of extracellular matrix assembly"/>
    <property type="evidence" value="ECO:0000266"/>
    <property type="project" value="RGD"/>
</dbReference>
<dbReference type="GO" id="GO:0010763">
    <property type="term" value="P:positive regulation of fibroblast migration"/>
    <property type="evidence" value="ECO:0000250"/>
    <property type="project" value="UniProtKB"/>
</dbReference>
<dbReference type="GO" id="GO:0048146">
    <property type="term" value="P:positive regulation of fibroblast proliferation"/>
    <property type="evidence" value="ECO:0000266"/>
    <property type="project" value="RGD"/>
</dbReference>
<dbReference type="GO" id="GO:0010628">
    <property type="term" value="P:positive regulation of gene expression"/>
    <property type="evidence" value="ECO:0000250"/>
    <property type="project" value="UniProtKB"/>
</dbReference>
<dbReference type="GO" id="GO:0050729">
    <property type="term" value="P:positive regulation of inflammatory response"/>
    <property type="evidence" value="ECO:0000266"/>
    <property type="project" value="RGD"/>
</dbReference>
<dbReference type="GO" id="GO:0032740">
    <property type="term" value="P:positive regulation of interleukin-17 production"/>
    <property type="evidence" value="ECO:0000250"/>
    <property type="project" value="UniProtKB"/>
</dbReference>
<dbReference type="GO" id="GO:0032755">
    <property type="term" value="P:positive regulation of interleukin-6 production"/>
    <property type="evidence" value="ECO:0000266"/>
    <property type="project" value="RGD"/>
</dbReference>
<dbReference type="GO" id="GO:0048298">
    <property type="term" value="P:positive regulation of isotype switching to IgA isotypes"/>
    <property type="evidence" value="ECO:0000250"/>
    <property type="project" value="AgBase"/>
</dbReference>
<dbReference type="GO" id="GO:0043410">
    <property type="term" value="P:positive regulation of MAPK cascade"/>
    <property type="evidence" value="ECO:0000266"/>
    <property type="project" value="RGD"/>
</dbReference>
<dbReference type="GO" id="GO:1902462">
    <property type="term" value="P:positive regulation of mesenchymal stem cell proliferation"/>
    <property type="evidence" value="ECO:0000266"/>
    <property type="project" value="RGD"/>
</dbReference>
<dbReference type="GO" id="GO:0014008">
    <property type="term" value="P:positive regulation of microglia differentiation"/>
    <property type="evidence" value="ECO:0000250"/>
    <property type="project" value="UniProtKB"/>
</dbReference>
<dbReference type="GO" id="GO:1902895">
    <property type="term" value="P:positive regulation of miRNA transcription"/>
    <property type="evidence" value="ECO:0000266"/>
    <property type="project" value="RGD"/>
</dbReference>
<dbReference type="GO" id="GO:0071677">
    <property type="term" value="P:positive regulation of mononuclear cell migration"/>
    <property type="evidence" value="ECO:0000315"/>
    <property type="project" value="RGD"/>
</dbReference>
<dbReference type="GO" id="GO:0042482">
    <property type="term" value="P:positive regulation of odontogenesis"/>
    <property type="evidence" value="ECO:0000266"/>
    <property type="project" value="RGD"/>
</dbReference>
<dbReference type="GO" id="GO:0051897">
    <property type="term" value="P:positive regulation of phosphatidylinositol 3-kinase/protein kinase B signal transduction"/>
    <property type="evidence" value="ECO:0000266"/>
    <property type="project" value="RGD"/>
</dbReference>
<dbReference type="GO" id="GO:2000636">
    <property type="term" value="P:positive regulation of primary miRNA processing"/>
    <property type="evidence" value="ECO:0000266"/>
    <property type="project" value="RGD"/>
</dbReference>
<dbReference type="GO" id="GO:0042307">
    <property type="term" value="P:positive regulation of protein import into nucleus"/>
    <property type="evidence" value="ECO:0000250"/>
    <property type="project" value="AgBase"/>
</dbReference>
<dbReference type="GO" id="GO:1900182">
    <property type="term" value="P:positive regulation of protein localization to nucleus"/>
    <property type="evidence" value="ECO:0000266"/>
    <property type="project" value="RGD"/>
</dbReference>
<dbReference type="GO" id="GO:0051247">
    <property type="term" value="P:positive regulation of protein metabolic process"/>
    <property type="evidence" value="ECO:0000250"/>
    <property type="project" value="UniProtKB"/>
</dbReference>
<dbReference type="GO" id="GO:0050714">
    <property type="term" value="P:positive regulation of protein secretion"/>
    <property type="evidence" value="ECO:0000250"/>
    <property type="project" value="UniProtKB"/>
</dbReference>
<dbReference type="GO" id="GO:0031334">
    <property type="term" value="P:positive regulation of protein-containing complex assembly"/>
    <property type="evidence" value="ECO:0000250"/>
    <property type="project" value="UniProtKB"/>
</dbReference>
<dbReference type="GO" id="GO:1904894">
    <property type="term" value="P:positive regulation of receptor signaling pathway via STAT"/>
    <property type="evidence" value="ECO:0000266"/>
    <property type="project" value="RGD"/>
</dbReference>
<dbReference type="GO" id="GO:0045591">
    <property type="term" value="P:positive regulation of regulatory T cell differentiation"/>
    <property type="evidence" value="ECO:0000266"/>
    <property type="project" value="RGD"/>
</dbReference>
<dbReference type="GO" id="GO:0060391">
    <property type="term" value="P:positive regulation of SMAD protein signal transduction"/>
    <property type="evidence" value="ECO:0000250"/>
    <property type="project" value="UniProtKB"/>
</dbReference>
<dbReference type="GO" id="GO:0051152">
    <property type="term" value="P:positive regulation of smooth muscle cell differentiation"/>
    <property type="evidence" value="ECO:0000314"/>
    <property type="project" value="MGI"/>
</dbReference>
<dbReference type="GO" id="GO:0048661">
    <property type="term" value="P:positive regulation of smooth muscle cell proliferation"/>
    <property type="evidence" value="ECO:0000266"/>
    <property type="project" value="RGD"/>
</dbReference>
<dbReference type="GO" id="GO:2000648">
    <property type="term" value="P:positive regulation of stem cell proliferation"/>
    <property type="evidence" value="ECO:0000266"/>
    <property type="project" value="RGD"/>
</dbReference>
<dbReference type="GO" id="GO:0032930">
    <property type="term" value="P:positive regulation of superoxide anion generation"/>
    <property type="evidence" value="ECO:0000250"/>
    <property type="project" value="UniProtKB"/>
</dbReference>
<dbReference type="GO" id="GO:0045944">
    <property type="term" value="P:positive regulation of transcription by RNA polymerase II"/>
    <property type="evidence" value="ECO:0000250"/>
    <property type="project" value="AgBase"/>
</dbReference>
<dbReference type="GO" id="GO:0032760">
    <property type="term" value="P:positive regulation of tumor necrosis factor production"/>
    <property type="evidence" value="ECO:0000266"/>
    <property type="project" value="RGD"/>
</dbReference>
<dbReference type="GO" id="GO:0043117">
    <property type="term" value="P:positive regulation of vascular permeability"/>
    <property type="evidence" value="ECO:0000266"/>
    <property type="project" value="RGD"/>
</dbReference>
<dbReference type="GO" id="GO:1904018">
    <property type="term" value="P:positive regulation of vasculature development"/>
    <property type="evidence" value="ECO:0000266"/>
    <property type="project" value="RGD"/>
</dbReference>
<dbReference type="GO" id="GO:0006611">
    <property type="term" value="P:protein export from nucleus"/>
    <property type="evidence" value="ECO:0000266"/>
    <property type="project" value="RGD"/>
</dbReference>
<dbReference type="GO" id="GO:0006468">
    <property type="term" value="P:protein phosphorylation"/>
    <property type="evidence" value="ECO:0000314"/>
    <property type="project" value="CACAO"/>
</dbReference>
<dbReference type="GO" id="GO:0032801">
    <property type="term" value="P:receptor catabolic process"/>
    <property type="evidence" value="ECO:0000250"/>
    <property type="project" value="UniProtKB"/>
</dbReference>
<dbReference type="GO" id="GO:0032956">
    <property type="term" value="P:regulation of actin cytoskeleton organization"/>
    <property type="evidence" value="ECO:0000266"/>
    <property type="project" value="RGD"/>
</dbReference>
<dbReference type="GO" id="GO:0060762">
    <property type="term" value="P:regulation of branching involved in mammary gland duct morphogenesis"/>
    <property type="evidence" value="ECO:0000266"/>
    <property type="project" value="RGD"/>
</dbReference>
<dbReference type="GO" id="GO:0061035">
    <property type="term" value="P:regulation of cartilage development"/>
    <property type="evidence" value="ECO:0000266"/>
    <property type="project" value="RGD"/>
</dbReference>
<dbReference type="GO" id="GO:0051726">
    <property type="term" value="P:regulation of cell cycle"/>
    <property type="evidence" value="ECO:0000266"/>
    <property type="project" value="RGD"/>
</dbReference>
<dbReference type="GO" id="GO:0001558">
    <property type="term" value="P:regulation of cell growth"/>
    <property type="evidence" value="ECO:0000304"/>
    <property type="project" value="RGD"/>
</dbReference>
<dbReference type="GO" id="GO:0042127">
    <property type="term" value="P:regulation of cell population proliferation"/>
    <property type="evidence" value="ECO:0000266"/>
    <property type="project" value="RGD"/>
</dbReference>
<dbReference type="GO" id="GO:0070173">
    <property type="term" value="P:regulation of enamel mineralization"/>
    <property type="evidence" value="ECO:0000266"/>
    <property type="project" value="RGD"/>
</dbReference>
<dbReference type="GO" id="GO:0010468">
    <property type="term" value="P:regulation of gene expression"/>
    <property type="evidence" value="ECO:0000266"/>
    <property type="project" value="RGD"/>
</dbReference>
<dbReference type="GO" id="GO:0032667">
    <property type="term" value="P:regulation of interleukin-23 production"/>
    <property type="evidence" value="ECO:0000266"/>
    <property type="project" value="RGD"/>
</dbReference>
<dbReference type="GO" id="GO:0042306">
    <property type="term" value="P:regulation of protein import into nucleus"/>
    <property type="evidence" value="ECO:0000266"/>
    <property type="project" value="RGD"/>
</dbReference>
<dbReference type="GO" id="GO:0045589">
    <property type="term" value="P:regulation of regulatory T cell differentiation"/>
    <property type="evidence" value="ECO:0000266"/>
    <property type="project" value="RGD"/>
</dbReference>
<dbReference type="GO" id="GO:0002028">
    <property type="term" value="P:regulation of sodium ion transport"/>
    <property type="evidence" value="ECO:0000266"/>
    <property type="project" value="RGD"/>
</dbReference>
<dbReference type="GO" id="GO:0016202">
    <property type="term" value="P:regulation of striated muscle tissue development"/>
    <property type="evidence" value="ECO:0000266"/>
    <property type="project" value="RGD"/>
</dbReference>
<dbReference type="GO" id="GO:0045066">
    <property type="term" value="P:regulatory T cell differentiation"/>
    <property type="evidence" value="ECO:0000266"/>
    <property type="project" value="RGD"/>
</dbReference>
<dbReference type="GO" id="GO:0070723">
    <property type="term" value="P:response to cholesterol"/>
    <property type="evidence" value="ECO:0000250"/>
    <property type="project" value="UniProtKB"/>
</dbReference>
<dbReference type="GO" id="GO:0032355">
    <property type="term" value="P:response to estradiol"/>
    <property type="evidence" value="ECO:0000270"/>
    <property type="project" value="RGD"/>
</dbReference>
<dbReference type="GO" id="GO:0045471">
    <property type="term" value="P:response to ethanol"/>
    <property type="evidence" value="ECO:0000270"/>
    <property type="project" value="RGD"/>
</dbReference>
<dbReference type="GO" id="GO:0009749">
    <property type="term" value="P:response to glucose"/>
    <property type="evidence" value="ECO:0000270"/>
    <property type="project" value="RGD"/>
</dbReference>
<dbReference type="GO" id="GO:0001666">
    <property type="term" value="P:response to hypoxia"/>
    <property type="evidence" value="ECO:0000270"/>
    <property type="project" value="RGD"/>
</dbReference>
<dbReference type="GO" id="GO:0035902">
    <property type="term" value="P:response to immobilization stress"/>
    <property type="evidence" value="ECO:0000270"/>
    <property type="project" value="RGD"/>
</dbReference>
<dbReference type="GO" id="GO:0034616">
    <property type="term" value="P:response to laminar fluid shear stress"/>
    <property type="evidence" value="ECO:0000270"/>
    <property type="project" value="RGD"/>
</dbReference>
<dbReference type="GO" id="GO:0032570">
    <property type="term" value="P:response to progesterone"/>
    <property type="evidence" value="ECO:0000250"/>
    <property type="project" value="UniProtKB"/>
</dbReference>
<dbReference type="GO" id="GO:1902074">
    <property type="term" value="P:response to salt"/>
    <property type="evidence" value="ECO:0000270"/>
    <property type="project" value="RGD"/>
</dbReference>
<dbReference type="GO" id="GO:0033280">
    <property type="term" value="P:response to vitamin D"/>
    <property type="evidence" value="ECO:0000270"/>
    <property type="project" value="RGD"/>
</dbReference>
<dbReference type="GO" id="GO:0009611">
    <property type="term" value="P:response to wounding"/>
    <property type="evidence" value="ECO:0000250"/>
    <property type="project" value="AgBase"/>
</dbReference>
<dbReference type="GO" id="GO:0009410">
    <property type="term" value="P:response to xenobiotic stimulus"/>
    <property type="evidence" value="ECO:0000270"/>
    <property type="project" value="RGD"/>
</dbReference>
<dbReference type="GO" id="GO:0061298">
    <property type="term" value="P:retina vasculature development in camera-type eye"/>
    <property type="evidence" value="ECO:0000266"/>
    <property type="project" value="RGD"/>
</dbReference>
<dbReference type="GO" id="GO:0007435">
    <property type="term" value="P:salivary gland morphogenesis"/>
    <property type="evidence" value="ECO:0000250"/>
    <property type="project" value="AgBase"/>
</dbReference>
<dbReference type="GO" id="GO:0002040">
    <property type="term" value="P:sprouting angiogenesis"/>
    <property type="evidence" value="ECO:0000266"/>
    <property type="project" value="RGD"/>
</dbReference>
<dbReference type="GO" id="GO:0072089">
    <property type="term" value="P:stem cell proliferation"/>
    <property type="evidence" value="ECO:0000266"/>
    <property type="project" value="RGD"/>
</dbReference>
<dbReference type="GO" id="GO:0043129">
    <property type="term" value="P:surfactant homeostasis"/>
    <property type="evidence" value="ECO:0000266"/>
    <property type="project" value="RGD"/>
</dbReference>
<dbReference type="GO" id="GO:0042110">
    <property type="term" value="P:T cell activation"/>
    <property type="evidence" value="ECO:0000266"/>
    <property type="project" value="RGD"/>
</dbReference>
<dbReference type="GO" id="GO:0030217">
    <property type="term" value="P:T cell differentiation"/>
    <property type="evidence" value="ECO:0000266"/>
    <property type="project" value="RGD"/>
</dbReference>
<dbReference type="GO" id="GO:0043029">
    <property type="term" value="P:T cell homeostasis"/>
    <property type="evidence" value="ECO:0000266"/>
    <property type="project" value="RGD"/>
</dbReference>
<dbReference type="GO" id="GO:0042098">
    <property type="term" value="P:T cell proliferation"/>
    <property type="evidence" value="ECO:0000266"/>
    <property type="project" value="RGD"/>
</dbReference>
<dbReference type="GO" id="GO:0002513">
    <property type="term" value="P:tolerance induction to self antigen"/>
    <property type="evidence" value="ECO:0000266"/>
    <property type="project" value="RGD"/>
</dbReference>
<dbReference type="GO" id="GO:0007179">
    <property type="term" value="P:transforming growth factor beta receptor signaling pathway"/>
    <property type="evidence" value="ECO:0000270"/>
    <property type="project" value="RGD"/>
</dbReference>
<dbReference type="GO" id="GO:0001657">
    <property type="term" value="P:ureteric bud development"/>
    <property type="evidence" value="ECO:0000266"/>
    <property type="project" value="RGD"/>
</dbReference>
<dbReference type="GO" id="GO:0001570">
    <property type="term" value="P:vasculogenesis"/>
    <property type="evidence" value="ECO:0000266"/>
    <property type="project" value="RGD"/>
</dbReference>
<dbReference type="GO" id="GO:0055010">
    <property type="term" value="P:ventricular cardiac muscle tissue morphogenesis"/>
    <property type="evidence" value="ECO:0000266"/>
    <property type="project" value="RGD"/>
</dbReference>
<dbReference type="CDD" id="cd19384">
    <property type="entry name" value="TGF_beta_TGFB1"/>
    <property type="match status" value="1"/>
</dbReference>
<dbReference type="FunFam" id="2.10.90.10:FF:000004">
    <property type="entry name" value="Transforming growth factor beta"/>
    <property type="match status" value="1"/>
</dbReference>
<dbReference type="FunFam" id="2.60.120.970:FF:000010">
    <property type="entry name" value="Transforming growth factor beta"/>
    <property type="match status" value="1"/>
</dbReference>
<dbReference type="Gene3D" id="2.60.120.970">
    <property type="match status" value="1"/>
</dbReference>
<dbReference type="Gene3D" id="2.10.90.10">
    <property type="entry name" value="Cystine-knot cytokines"/>
    <property type="match status" value="1"/>
</dbReference>
<dbReference type="InterPro" id="IPR029034">
    <property type="entry name" value="Cystine-knot_cytokine"/>
</dbReference>
<dbReference type="InterPro" id="IPR001839">
    <property type="entry name" value="TGF-b_C"/>
</dbReference>
<dbReference type="InterPro" id="IPR001111">
    <property type="entry name" value="TGF-b_propeptide"/>
</dbReference>
<dbReference type="InterPro" id="IPR016319">
    <property type="entry name" value="TGF-beta"/>
</dbReference>
<dbReference type="InterPro" id="IPR015615">
    <property type="entry name" value="TGF-beta-rel"/>
</dbReference>
<dbReference type="InterPro" id="IPR003939">
    <property type="entry name" value="TGFb1"/>
</dbReference>
<dbReference type="InterPro" id="IPR017948">
    <property type="entry name" value="TGFb_CS"/>
</dbReference>
<dbReference type="PANTHER" id="PTHR11848">
    <property type="entry name" value="TGF-BETA FAMILY"/>
    <property type="match status" value="1"/>
</dbReference>
<dbReference type="PANTHER" id="PTHR11848:SF125">
    <property type="entry name" value="TRANSFORMING GROWTH FACTOR BETA-1 PROPROTEIN"/>
    <property type="match status" value="1"/>
</dbReference>
<dbReference type="Pfam" id="PF00019">
    <property type="entry name" value="TGF_beta"/>
    <property type="match status" value="1"/>
</dbReference>
<dbReference type="Pfam" id="PF00688">
    <property type="entry name" value="TGFb_propeptide"/>
    <property type="match status" value="1"/>
</dbReference>
<dbReference type="PIRSF" id="PIRSF001787">
    <property type="entry name" value="TGF-beta"/>
    <property type="match status" value="1"/>
</dbReference>
<dbReference type="PRINTS" id="PR01423">
    <property type="entry name" value="TGFBETA"/>
</dbReference>
<dbReference type="PRINTS" id="PR01424">
    <property type="entry name" value="TGFBETA1"/>
</dbReference>
<dbReference type="SMART" id="SM00204">
    <property type="entry name" value="TGFB"/>
    <property type="match status" value="1"/>
</dbReference>
<dbReference type="SUPFAM" id="SSF57501">
    <property type="entry name" value="Cystine-knot cytokines"/>
    <property type="match status" value="1"/>
</dbReference>
<dbReference type="PROSITE" id="PS00250">
    <property type="entry name" value="TGF_BETA_1"/>
    <property type="match status" value="1"/>
</dbReference>
<dbReference type="PROSITE" id="PS51362">
    <property type="entry name" value="TGF_BETA_2"/>
    <property type="match status" value="1"/>
</dbReference>
<name>TGFB1_RAT</name>
<feature type="signal peptide" evidence="1">
    <location>
        <begin position="1"/>
        <end position="29"/>
    </location>
</feature>
<feature type="chain" id="PRO_0000033770" description="Latency-associated peptide" evidence="1">
    <location>
        <begin position="30"/>
        <end position="278"/>
    </location>
</feature>
<feature type="chain" id="PRO_0000033771" description="Transforming growth factor beta-1" evidence="1">
    <location>
        <begin position="279"/>
        <end position="390"/>
    </location>
</feature>
<feature type="region of interest" description="Straightjacket domain" evidence="3">
    <location>
        <begin position="30"/>
        <end position="74"/>
    </location>
</feature>
<feature type="region of interest" description="Arm domain" evidence="3">
    <location>
        <begin position="75"/>
        <end position="271"/>
    </location>
</feature>
<feature type="region of interest" description="Bowtie tail" evidence="1">
    <location>
        <begin position="226"/>
        <end position="252"/>
    </location>
</feature>
<feature type="short sequence motif" description="Cell attachment site" evidence="4">
    <location>
        <begin position="244"/>
        <end position="246"/>
    </location>
</feature>
<feature type="site" description="Cleavage; by FURIN" evidence="1">
    <location>
        <begin position="278"/>
        <end position="279"/>
    </location>
</feature>
<feature type="glycosylation site" description="N-linked (GlcNAc...) asparagine" evidence="4">
    <location>
        <position position="82"/>
    </location>
</feature>
<feature type="glycosylation site" description="N-linked (GlcNAc...) asparagine" evidence="4">
    <location>
        <position position="136"/>
    </location>
</feature>
<feature type="glycosylation site" description="N-linked (GlcNAc...) asparagine" evidence="4">
    <location>
        <position position="176"/>
    </location>
</feature>
<feature type="disulfide bond" description="Interchain (with C-1359 or C-1384 in LTBP1); in inactive form" evidence="3">
    <location>
        <position position="33"/>
    </location>
</feature>
<feature type="disulfide bond" description="Interchain (with C-225)" evidence="1">
    <location>
        <position position="223"/>
    </location>
</feature>
<feature type="disulfide bond" description="Interchain (with C-223)" evidence="1">
    <location>
        <position position="225"/>
    </location>
</feature>
<feature type="disulfide bond" evidence="1">
    <location>
        <begin position="285"/>
        <end position="294"/>
    </location>
</feature>
<feature type="disulfide bond" evidence="1">
    <location>
        <begin position="293"/>
        <end position="356"/>
    </location>
</feature>
<feature type="disulfide bond" evidence="1">
    <location>
        <begin position="322"/>
        <end position="387"/>
    </location>
</feature>
<feature type="disulfide bond" evidence="1">
    <location>
        <begin position="326"/>
        <end position="389"/>
    </location>
</feature>
<feature type="disulfide bond" description="Interchain" evidence="1">
    <location>
        <position position="355"/>
    </location>
</feature>
<accession>P17246</accession>
<accession>Q53YM8</accession>
<evidence type="ECO:0000250" key="1">
    <source>
        <dbReference type="UniProtKB" id="P01137"/>
    </source>
</evidence>
<evidence type="ECO:0000250" key="2">
    <source>
        <dbReference type="UniProtKB" id="P04202"/>
    </source>
</evidence>
<evidence type="ECO:0000250" key="3">
    <source>
        <dbReference type="UniProtKB" id="P07200"/>
    </source>
</evidence>
<evidence type="ECO:0000255" key="4"/>
<evidence type="ECO:0000269" key="5">
    <source>
    </source>
</evidence>
<evidence type="ECO:0000269" key="6">
    <source>
    </source>
</evidence>
<evidence type="ECO:0000305" key="7"/>
<organism>
    <name type="scientific">Rattus norvegicus</name>
    <name type="common">Rat</name>
    <dbReference type="NCBI Taxonomy" id="10116"/>
    <lineage>
        <taxon>Eukaryota</taxon>
        <taxon>Metazoa</taxon>
        <taxon>Chordata</taxon>
        <taxon>Craniata</taxon>
        <taxon>Vertebrata</taxon>
        <taxon>Euteleostomi</taxon>
        <taxon>Mammalia</taxon>
        <taxon>Eutheria</taxon>
        <taxon>Euarchontoglires</taxon>
        <taxon>Glires</taxon>
        <taxon>Rodentia</taxon>
        <taxon>Myomorpha</taxon>
        <taxon>Muroidea</taxon>
        <taxon>Muridae</taxon>
        <taxon>Murinae</taxon>
        <taxon>Rattus</taxon>
    </lineage>
</organism>
<keyword id="KW-0165">Cleavage on pair of basic residues</keyword>
<keyword id="KW-1015">Disulfide bond</keyword>
<keyword id="KW-0272">Extracellular matrix</keyword>
<keyword id="KW-0325">Glycoprotein</keyword>
<keyword id="KW-0339">Growth factor</keyword>
<keyword id="KW-0497">Mitogen</keyword>
<keyword id="KW-1185">Reference proteome</keyword>
<keyword id="KW-0964">Secreted</keyword>
<keyword id="KW-0732">Signal</keyword>
<reference key="1">
    <citation type="journal article" date="1990" name="Nucleic Acids Res.">
        <title>cDNA cloning by PCR of rat transforming growth factor beta-1.</title>
        <authorList>
            <person name="Qian S.W."/>
            <person name="Kondaiah P."/>
            <person name="Roberts A.B."/>
            <person name="Sporn M.B."/>
        </authorList>
    </citation>
    <scope>NUCLEOTIDE SEQUENCE [MRNA]</scope>
    <source>
        <strain>Sprague-Dawley</strain>
        <tissue>Heart</tissue>
    </source>
</reference>
<reference key="2">
    <citation type="submission" date="2004-02" db="EMBL/GenBank/DDBJ databases">
        <title>Open reading frame sequence of rat TGF beta 1.</title>
        <authorList>
            <person name="Dai W.-J."/>
            <person name="Jiang H.-C."/>
            <person name="Fu S.-B."/>
        </authorList>
    </citation>
    <scope>NUCLEOTIDE SEQUENCE [MRNA]</scope>
    <source>
        <tissue>Liver</tissue>
    </source>
</reference>
<reference key="3">
    <citation type="journal article" date="2004" name="Genome Res.">
        <title>The status, quality, and expansion of the NIH full-length cDNA project: the Mammalian Gene Collection (MGC).</title>
        <authorList>
            <consortium name="The MGC Project Team"/>
        </authorList>
    </citation>
    <scope>NUCLEOTIDE SEQUENCE [LARGE SCALE MRNA]</scope>
    <source>
        <tissue>Kidney</tissue>
    </source>
</reference>
<reference key="4">
    <citation type="journal article" date="1991" name="Ciba Found. Symp.">
        <title>The effects of TGF-beta on bone.</title>
        <authorList>
            <person name="Mundy G.R."/>
        </authorList>
    </citation>
    <scope>FUNCTION</scope>
    <scope>TISSUE SPECIFICITY</scope>
</reference>
<reference key="5">
    <citation type="journal article" date="2002" name="Calcif. Tissue Int.">
        <title>The first stage of transforming growth factor beta1 activation is release of the large latent complex from the extracellular matrix of growth plate chondrocytes by matrix vesicle stromelysin-1 (MMP-3).</title>
        <authorList>
            <person name="Maeda S."/>
            <person name="Dean D.D."/>
            <person name="Gomez R."/>
            <person name="Schwartz Z."/>
            <person name="Boyan B.D."/>
        </authorList>
    </citation>
    <scope>SUBUNIT</scope>
</reference>
<reference key="6">
    <citation type="journal article" date="2016" name="J. Cell Biol.">
        <title>Plakophilin-2 loss promotes TGF-beta1/p38 MAPK-dependent fibrotic gene expression in cardiomyocytes.</title>
        <authorList>
            <person name="Dubash A.D."/>
            <person name="Kam C.Y."/>
            <person name="Aguado B.A."/>
            <person name="Patel D.M."/>
            <person name="Delmar M."/>
            <person name="Shea L.D."/>
            <person name="Green K.J."/>
        </authorList>
    </citation>
    <scope>TISSUE SPECIFICITY</scope>
</reference>
<gene>
    <name type="primary">Tgfb1</name>
</gene>
<sequence>MPPSGLRLLPLLLPLPWLLVLTPGRPAAGLSTCKTIDMELVKRKRIEAIRGQILSKLRLASPPSQGEVPPGPLPEAVLALYNSTRDRVAGESADPEPEPEADYYAKEVTRVLMVDRNNAIYDKTKDITHSIYMFFNTSDIREAVPEPPLLSRAELRLQRFKSTVEQHVELYQKYSNNSWRYLGNRLLTPTDTPEWLSFDVTGVVRQWLNQGDGIQGFRFSAHCSCDSKDNVLHVEINGISPKRRGDLGTIHDMNRPFLLLMATPLERAQHLHSSRHRRALDTNYCFSSTEKNCCVRQLYIDFRKDLGWKWIHEPKGYHANFCLGPCPYIWSLDTQYSKVLALYNQHNPGASASPCCVPQALEPLPIVYYVGRKPKVEQLSNMIVRSCKCS</sequence>
<proteinExistence type="evidence at protein level"/>
<comment type="function">
    <text evidence="1">Transforming growth factor beta-1 proprotein: Precursor of the Latency-associated peptide (LAP) and Transforming growth factor beta-1 (TGF-beta-1) chains, which constitute the regulatory and active subunit of TGF-beta-1, respectively.</text>
</comment>
<comment type="function">
    <molecule>Latency-associated peptide</molecule>
    <text evidence="1">Required to maintain the Transforming growth factor beta-1 (TGF-beta-1) chain in a latent state during storage in extracellular matrix. Associates non-covalently with TGF-beta-1 and regulates its activation via interaction with 'milieu molecules', such as LTBP1, LRRC32/GARP and LRRC33/NRROS, that control activation of TGF-beta-1. Interaction with LRRC33/NRROS regulates activation of TGF-beta-1 in macrophages and microglia. Interaction with LRRC32/GARP controls activation of TGF-beta-1 on the surface of activated regulatory T-cells (Tregs). Interaction with integrins (ITGAV:ITGB6 or ITGAV:ITGB8) results in distortion of the Latency-associated peptide chain and subsequent release of the active TGF-beta-1.</text>
</comment>
<comment type="function">
    <molecule>Transforming growth factor beta-1</molecule>
    <text evidence="1 2 5">Multifunctional protein that regulates the growth and differentiation of various cell types and is involved in various processes, such as normal development, immune function, microglia function and responses to neurodegeneration (By similarity). Activation into mature form follows different steps: following cleavage of the proprotein in the Golgi apparatus, Latency-associated peptide (LAP) and Transforming growth factor beta-1 (TGF-beta-1) chains remain non-covalently linked rendering TGF-beta-1 inactive during storage in extracellular matrix (By similarity). At the same time, LAP chain interacts with 'milieu molecules', such as LTBP1, LRRC32/GARP and LRRC33/NRROS that control activation of TGF-beta-1 and maintain it in a latent state during storage in extracellular milieus. TGF-beta-1 is released from LAP by integrins (ITGAV:ITGB6 or ITGAV:ITGB8): integrin-binding to LAP stabilizes an alternative conformation of the LAP bowtie tail and results in distortion of the LAP chain and subsequent release of the active TGF-beta-1 (By similarity). Once activated following release of LAP, TGF-beta-1 acts by binding to TGF-beta receptors (TGFBR1 and TGFBR2), which transduce signal (By similarity). While expressed by many cells types, TGF-beta-1 only has a very localized range of action within cell environment thanks to fine regulation of its activation by Latency-associated peptide chain (LAP) and 'milieu molecules' (PubMed:2070682). Plays an important role in bone remodeling: acts as a potent stimulator of osteoblastic bone formation, causing chemotaxis, proliferation and differentiation in committed osteoblasts (PubMed:2070682). Can promote either T-helper 17 cells (Th17) or regulatory T-cells (Treg) lineage differentiation in a concentration-dependent manner (By similarity). At high concentrations, leads to FOXP3-mediated suppression of RORC and down-regulation of IL-17 expression, favoring Treg cell development (By similarity). At low concentrations in concert with IL-6 and IL-21, leads to expression of the IL-17 and IL-23 receptors, favoring differentiation to Th17 cells (By similarity). Stimulates sustained production of collagen through the activation of CREB3L1 by regulated intramembrane proteolysis (RIP). Mediates SMAD2/3 activation by inducing its phosphorylation and subsequent translocation to the nucleus. Positively regulates odontoblastic differentiation in dental papilla cells, via promotion of IPO7-mediated translocation of phosphorylated SMAD2 to the nucleus and subsequent transcription of target genes (By similarity). Can induce epithelial-to-mesenchymal transition (EMT) and cell migration in various cell types (By similarity).</text>
</comment>
<comment type="subunit">
    <text evidence="1 2">Homodimer; disulfide-linked. Interacts with the serine proteases, HTRA1 and HTRA3: the interaction with either inhibits TGFB1-mediated signaling and the HTRA protease activity is required for this inhibition. May interact with THSD4; this interaction may lead to sequestration by FBN1 microfibril assembly and attenuation of TGFB signaling. Interacts with CD109, DPT and ASPN. Interacts with EFEMP2. Interacts with TSKU; the interaction contributes to regulation of the hair cycle. Interacts with TGFBR3 (By similarity).</text>
</comment>
<comment type="subunit">
    <molecule>Latency-associated peptide</molecule>
    <text evidence="1 2">Homodimer; disulfide-linked. Interacts with transforming growth factor beta-1 (TGF-beta-1) chain; interaction is non-covalent and maintains TGF-beta-1 in a latent state; each latency-associated peptide (LAP) monomer interacts with TGF-beta-1 in the other monomer. Interacts with LTBP1; leading to regulation of TGF-beta-1 activation. Interacts with LRRC32/GARP; leading to regulation of TGF-beta-1 activation on the surface of activated regulatory T-cells (Tregs). Interacts with LRRC33/NRROS; leading to regulation of TGF-beta-1 activation in macrophages and microglia. Interacts (via cell attachment site) with integrins ITGAV and ITGB6 (ITGAV:ITGB6), leading to release of the active TGF-beta-1. Interacts with NREP; the interaction results in a decrease in TGFB1 autoinduction. Interacts with HSP90AB1; inhibits latent TGFB1 activation.</text>
</comment>
<comment type="subunit">
    <molecule>Transforming growth factor beta-1</molecule>
    <text evidence="1">Homodimer; disulfide-linked. Interacts with TGF-beta receptors (TGFBR1 and TGFBR2), leading to signal transduction.</text>
</comment>
<comment type="subcellular location">
    <molecule>Latency-associated peptide</molecule>
    <subcellularLocation>
        <location evidence="1">Secreted</location>
        <location evidence="1">Extracellular space</location>
        <location evidence="1">Extracellular matrix</location>
    </subcellularLocation>
</comment>
<comment type="subcellular location">
    <molecule>Transforming growth factor beta-1</molecule>
    <subcellularLocation>
        <location evidence="1">Secreted</location>
    </subcellularLocation>
</comment>
<comment type="tissue specificity">
    <text evidence="5 6">Abundant in the bone matrix (PubMed:2070682). Expressed in cardiomyocytes (PubMed:26858265).</text>
</comment>
<comment type="domain">
    <molecule>Latency-associated peptide</molecule>
    <text evidence="3">The 'straitjacket' and 'arm' domains encircle the Transforming growth factor beta-1 (TGF-beta-1) monomers and are fastened together by strong bonding between Lys-56 and Tyr-103/Tyr-104.</text>
</comment>
<comment type="domain">
    <molecule>Latency-associated peptide</molecule>
    <text evidence="1">The cell attachment site motif mediates binding to integrins (ITGAV:ITGB6 or ITGAV:ITGB8). The motif locates to a long loop in the arm domain called the bowtie tail. Integrin-binding stabilizes an alternative conformation of the bowtie tail. Activation by integrin requires force application by the actin cytoskeleton, which is resisted by the 'milieu molecules' (such as LTBP1, LRRC32/GARP and/or LRRC33/NRROS), resulting in distortion of the prodomain and release of the active TGF-beta-1.</text>
</comment>
<comment type="PTM">
    <text evidence="1">Transforming growth factor beta-1 proprotein: The precursor proprotein is cleaved in the Golgi apparatus by FURIN to form Transforming growth factor beta-1 (TGF-beta-1) and Latency-associated peptide (LAP) chains, which remain non-covalently linked, rendering TGF-beta-1 inactive.</text>
</comment>
<comment type="PTM">
    <molecule>Latency-associated peptide</molecule>
    <text evidence="1">N-glycosylated. Deglycosylation leads to activation of Transforming growth factor beta-1 (TGF-beta-1); mechanisms triggering deglycosylation-driven activation of TGF-beta-1 are however unclear.</text>
</comment>
<comment type="similarity">
    <text evidence="7">Belongs to the TGF-beta family.</text>
</comment>
<protein>
    <recommendedName>
        <fullName>Transforming growth factor beta-1 proprotein</fullName>
    </recommendedName>
    <component>
        <recommendedName>
            <fullName>Latency-associated peptide</fullName>
            <shortName>LAP</shortName>
        </recommendedName>
    </component>
    <component>
        <recommendedName>
            <fullName>Transforming growth factor beta-1</fullName>
            <shortName>TGF-beta-1</shortName>
        </recommendedName>
    </component>
</protein>